<protein>
    <recommendedName>
        <fullName>Mediator of RNA polymerase II transcription subunit 21</fullName>
    </recommendedName>
    <alternativeName>
        <fullName>Mediator complex subunit 21</fullName>
    </alternativeName>
    <alternativeName>
        <fullName>Suppressor of RNA polymerase B 7</fullName>
    </alternativeName>
</protein>
<feature type="chain" id="PRO_0000096376" description="Mediator of RNA polymerase II transcription subunit 21">
    <location>
        <begin position="1"/>
        <end position="138"/>
    </location>
</feature>
<feature type="coiled-coil region" evidence="1">
    <location>
        <begin position="87"/>
        <end position="128"/>
    </location>
</feature>
<feature type="helix" evidence="4">
    <location>
        <begin position="4"/>
        <end position="28"/>
    </location>
</feature>
<feature type="strand" evidence="4">
    <location>
        <begin position="35"/>
        <end position="37"/>
    </location>
</feature>
<feature type="helix" evidence="4">
    <location>
        <begin position="43"/>
        <end position="46"/>
    </location>
</feature>
<feature type="helix" evidence="4">
    <location>
        <begin position="51"/>
        <end position="78"/>
    </location>
</feature>
<feature type="helix" evidence="4">
    <location>
        <begin position="87"/>
        <end position="136"/>
    </location>
</feature>
<dbReference type="EMBL" id="CU329671">
    <property type="protein sequence ID" value="CAA22343.1"/>
    <property type="molecule type" value="Genomic_DNA"/>
</dbReference>
<dbReference type="PIR" id="T39504">
    <property type="entry name" value="T39504"/>
</dbReference>
<dbReference type="RefSeq" id="NP_596630.1">
    <property type="nucleotide sequence ID" value="NM_001022551.2"/>
</dbReference>
<dbReference type="PDB" id="5N9J">
    <property type="method" value="X-ray"/>
    <property type="resolution" value="3.40 A"/>
    <property type="chains" value="D=1-138"/>
</dbReference>
<dbReference type="PDB" id="5U0P">
    <property type="method" value="EM"/>
    <property type="resolution" value="4.40 A"/>
    <property type="chains" value="U=1-138"/>
</dbReference>
<dbReference type="PDB" id="5U0S">
    <property type="method" value="EM"/>
    <property type="resolution" value="7.80 A"/>
    <property type="chains" value="U=1-138"/>
</dbReference>
<dbReference type="PDBsum" id="5N9J"/>
<dbReference type="PDBsum" id="5U0P"/>
<dbReference type="PDBsum" id="5U0S"/>
<dbReference type="EMDB" id="EMD-8479"/>
<dbReference type="EMDB" id="EMD-8480"/>
<dbReference type="SMR" id="O94376"/>
<dbReference type="BioGRID" id="276742">
    <property type="interactions" value="10"/>
</dbReference>
<dbReference type="FunCoup" id="O94376">
    <property type="interactions" value="61"/>
</dbReference>
<dbReference type="IntAct" id="O94376">
    <property type="interactions" value="1"/>
</dbReference>
<dbReference type="STRING" id="284812.O94376"/>
<dbReference type="iPTMnet" id="O94376"/>
<dbReference type="PaxDb" id="4896-SPBC1604.10.1"/>
<dbReference type="EnsemblFungi" id="SPBC1604.10.1">
    <property type="protein sequence ID" value="SPBC1604.10.1:pep"/>
    <property type="gene ID" value="SPBC1604.10"/>
</dbReference>
<dbReference type="GeneID" id="2540209"/>
<dbReference type="KEGG" id="spo:2540209"/>
<dbReference type="PomBase" id="SPBC1604.10"/>
<dbReference type="VEuPathDB" id="FungiDB:SPBC1604.10"/>
<dbReference type="eggNOG" id="KOG1510">
    <property type="taxonomic scope" value="Eukaryota"/>
</dbReference>
<dbReference type="HOGENOM" id="CLU_094271_1_1_1"/>
<dbReference type="InParanoid" id="O94376"/>
<dbReference type="OMA" id="LTTYHDH"/>
<dbReference type="PhylomeDB" id="O94376"/>
<dbReference type="PRO" id="PR:O94376"/>
<dbReference type="Proteomes" id="UP000002485">
    <property type="component" value="Chromosome II"/>
</dbReference>
<dbReference type="GO" id="GO:0016592">
    <property type="term" value="C:mediator complex"/>
    <property type="evidence" value="ECO:0000314"/>
    <property type="project" value="PomBase"/>
</dbReference>
<dbReference type="GO" id="GO:0005634">
    <property type="term" value="C:nucleus"/>
    <property type="evidence" value="ECO:0007005"/>
    <property type="project" value="PomBase"/>
</dbReference>
<dbReference type="GO" id="GO:0003713">
    <property type="term" value="F:transcription coactivator activity"/>
    <property type="evidence" value="ECO:0000314"/>
    <property type="project" value="PomBase"/>
</dbReference>
<dbReference type="GO" id="GO:0003712">
    <property type="term" value="F:transcription coregulator activity"/>
    <property type="evidence" value="ECO:0000318"/>
    <property type="project" value="GO_Central"/>
</dbReference>
<dbReference type="GO" id="GO:0060261">
    <property type="term" value="P:positive regulation of transcription initiation by RNA polymerase II"/>
    <property type="evidence" value="ECO:0000269"/>
    <property type="project" value="PomBase"/>
</dbReference>
<dbReference type="GO" id="GO:0006357">
    <property type="term" value="P:regulation of transcription by RNA polymerase II"/>
    <property type="evidence" value="ECO:0000318"/>
    <property type="project" value="GO_Central"/>
</dbReference>
<dbReference type="Gene3D" id="6.10.280.10">
    <property type="entry name" value="Mediator complex, subunit Med21"/>
    <property type="match status" value="1"/>
</dbReference>
<dbReference type="InterPro" id="IPR037212">
    <property type="entry name" value="Med7/Med21-like"/>
</dbReference>
<dbReference type="InterPro" id="IPR021384">
    <property type="entry name" value="Mediator_Med21"/>
</dbReference>
<dbReference type="PANTHER" id="PTHR13381:SF0">
    <property type="entry name" value="MEDIATOR OF RNA POLYMERASE II TRANSCRIPTION SUBUNIT 21"/>
    <property type="match status" value="1"/>
</dbReference>
<dbReference type="PANTHER" id="PTHR13381">
    <property type="entry name" value="RNA POLYMERASE II HOLOENZYME COMPONENT SRB7"/>
    <property type="match status" value="1"/>
</dbReference>
<dbReference type="Pfam" id="PF11221">
    <property type="entry name" value="Med21"/>
    <property type="match status" value="1"/>
</dbReference>
<dbReference type="SUPFAM" id="SSF140718">
    <property type="entry name" value="Mediator hinge subcomplex-like"/>
    <property type="match status" value="1"/>
</dbReference>
<accession>O94376</accession>
<reference key="1">
    <citation type="journal article" date="2002" name="Nature">
        <title>The genome sequence of Schizosaccharomyces pombe.</title>
        <authorList>
            <person name="Wood V."/>
            <person name="Gwilliam R."/>
            <person name="Rajandream M.A."/>
            <person name="Lyne M.H."/>
            <person name="Lyne R."/>
            <person name="Stewart A."/>
            <person name="Sgouros J.G."/>
            <person name="Peat N."/>
            <person name="Hayles J."/>
            <person name="Baker S.G."/>
            <person name="Basham D."/>
            <person name="Bowman S."/>
            <person name="Brooks K."/>
            <person name="Brown D."/>
            <person name="Brown S."/>
            <person name="Chillingworth T."/>
            <person name="Churcher C.M."/>
            <person name="Collins M."/>
            <person name="Connor R."/>
            <person name="Cronin A."/>
            <person name="Davis P."/>
            <person name="Feltwell T."/>
            <person name="Fraser A."/>
            <person name="Gentles S."/>
            <person name="Goble A."/>
            <person name="Hamlin N."/>
            <person name="Harris D.E."/>
            <person name="Hidalgo J."/>
            <person name="Hodgson G."/>
            <person name="Holroyd S."/>
            <person name="Hornsby T."/>
            <person name="Howarth S."/>
            <person name="Huckle E.J."/>
            <person name="Hunt S."/>
            <person name="Jagels K."/>
            <person name="James K.D."/>
            <person name="Jones L."/>
            <person name="Jones M."/>
            <person name="Leather S."/>
            <person name="McDonald S."/>
            <person name="McLean J."/>
            <person name="Mooney P."/>
            <person name="Moule S."/>
            <person name="Mungall K.L."/>
            <person name="Murphy L.D."/>
            <person name="Niblett D."/>
            <person name="Odell C."/>
            <person name="Oliver K."/>
            <person name="O'Neil S."/>
            <person name="Pearson D."/>
            <person name="Quail M.A."/>
            <person name="Rabbinowitsch E."/>
            <person name="Rutherford K.M."/>
            <person name="Rutter S."/>
            <person name="Saunders D."/>
            <person name="Seeger K."/>
            <person name="Sharp S."/>
            <person name="Skelton J."/>
            <person name="Simmonds M.N."/>
            <person name="Squares R."/>
            <person name="Squares S."/>
            <person name="Stevens K."/>
            <person name="Taylor K."/>
            <person name="Taylor R.G."/>
            <person name="Tivey A."/>
            <person name="Walsh S.V."/>
            <person name="Warren T."/>
            <person name="Whitehead S."/>
            <person name="Woodward J.R."/>
            <person name="Volckaert G."/>
            <person name="Aert R."/>
            <person name="Robben J."/>
            <person name="Grymonprez B."/>
            <person name="Weltjens I."/>
            <person name="Vanstreels E."/>
            <person name="Rieger M."/>
            <person name="Schaefer M."/>
            <person name="Mueller-Auer S."/>
            <person name="Gabel C."/>
            <person name="Fuchs M."/>
            <person name="Duesterhoeft A."/>
            <person name="Fritzc C."/>
            <person name="Holzer E."/>
            <person name="Moestl D."/>
            <person name="Hilbert H."/>
            <person name="Borzym K."/>
            <person name="Langer I."/>
            <person name="Beck A."/>
            <person name="Lehrach H."/>
            <person name="Reinhardt R."/>
            <person name="Pohl T.M."/>
            <person name="Eger P."/>
            <person name="Zimmermann W."/>
            <person name="Wedler H."/>
            <person name="Wambutt R."/>
            <person name="Purnelle B."/>
            <person name="Goffeau A."/>
            <person name="Cadieu E."/>
            <person name="Dreano S."/>
            <person name="Gloux S."/>
            <person name="Lelaure V."/>
            <person name="Mottier S."/>
            <person name="Galibert F."/>
            <person name="Aves S.J."/>
            <person name="Xiang Z."/>
            <person name="Hunt C."/>
            <person name="Moore K."/>
            <person name="Hurst S.M."/>
            <person name="Lucas M."/>
            <person name="Rochet M."/>
            <person name="Gaillardin C."/>
            <person name="Tallada V.A."/>
            <person name="Garzon A."/>
            <person name="Thode G."/>
            <person name="Daga R.R."/>
            <person name="Cruzado L."/>
            <person name="Jimenez J."/>
            <person name="Sanchez M."/>
            <person name="del Rey F."/>
            <person name="Benito J."/>
            <person name="Dominguez A."/>
            <person name="Revuelta J.L."/>
            <person name="Moreno S."/>
            <person name="Armstrong J."/>
            <person name="Forsburg S.L."/>
            <person name="Cerutti L."/>
            <person name="Lowe T."/>
            <person name="McCombie W.R."/>
            <person name="Paulsen I."/>
            <person name="Potashkin J."/>
            <person name="Shpakovski G.V."/>
            <person name="Ussery D."/>
            <person name="Barrell B.G."/>
            <person name="Nurse P."/>
        </authorList>
    </citation>
    <scope>NUCLEOTIDE SEQUENCE [LARGE SCALE GENOMIC DNA]</scope>
    <source>
        <strain>972 / ATCC 24843</strain>
    </source>
</reference>
<reference key="2">
    <citation type="journal article" date="2001" name="Proc. Natl. Acad. Sci. U.S.A.">
        <title>Analysis of Schizosaccharomyces pombe mediator reveals a set of essential subunits conserved between yeast and metazoan cells.</title>
        <authorList>
            <person name="Spaehr H."/>
            <person name="Samuelsen C.O."/>
            <person name="Baraznenok V."/>
            <person name="Ernest I."/>
            <person name="Huylebroeck D."/>
            <person name="Remacle J.E."/>
            <person name="Samuelsson T."/>
            <person name="Kieselbach T."/>
            <person name="Holmberg S."/>
            <person name="Gustafsson C.M."/>
        </authorList>
    </citation>
    <scope>IDENTIFICATION BY MASS SPECTROMETRY</scope>
    <scope>IDENTIFICATION IN THE MEDIATOR COMPLEX</scope>
</reference>
<organism>
    <name type="scientific">Schizosaccharomyces pombe (strain 972 / ATCC 24843)</name>
    <name type="common">Fission yeast</name>
    <dbReference type="NCBI Taxonomy" id="284812"/>
    <lineage>
        <taxon>Eukaryota</taxon>
        <taxon>Fungi</taxon>
        <taxon>Dikarya</taxon>
        <taxon>Ascomycota</taxon>
        <taxon>Taphrinomycotina</taxon>
        <taxon>Schizosaccharomycetes</taxon>
        <taxon>Schizosaccharomycetales</taxon>
        <taxon>Schizosaccharomycetaceae</taxon>
        <taxon>Schizosaccharomyces</taxon>
    </lineage>
</organism>
<evidence type="ECO:0000255" key="1"/>
<evidence type="ECO:0000269" key="2">
    <source>
    </source>
</evidence>
<evidence type="ECO:0000305" key="3"/>
<evidence type="ECO:0007829" key="4">
    <source>
        <dbReference type="PDB" id="5N9J"/>
    </source>
</evidence>
<name>MED21_SCHPO</name>
<comment type="function">
    <text>Component of the Mediator complex, a coactivator involved in the regulated transcription of nearly all RNA polymerase II-dependent genes. Mediator functions as a bridge to convey information from gene-specific regulatory proteins to the basal RNA polymerase II transcription machinery. Mediator is recruited to promoters by direct interactions with regulatory proteins and serves as a scaffold for the assembly of a functional preinitiation complex with RNA polymerase II and the general transcription factors.</text>
</comment>
<comment type="subunit">
    <text evidence="2">Component of the Mediator complex.</text>
</comment>
<comment type="subcellular location">
    <subcellularLocation>
        <location evidence="3">Nucleus</location>
    </subcellularLocation>
</comment>
<comment type="similarity">
    <text evidence="3">Belongs to the Mediator complex subunit 21 family.</text>
</comment>
<gene>
    <name type="primary">med21</name>
    <name type="synonym">srb7</name>
    <name type="ORF">SPBC1604.10</name>
</gene>
<proteinExistence type="evidence at protein level"/>
<sequence length="138" mass="15800">MACRCTQLQDTIDEVATQFYSSIHYLSSHHDFVPLPGQEKVSDSKVNPISAEELQFAQRDLAKDLVTKFMQIDTLINQLPGISTAPKHQLEKIKKLQNSIEEKQLERKSLESENEDLKLQLAKRIETFGRLSCVLFQP</sequence>
<keyword id="KW-0002">3D-structure</keyword>
<keyword id="KW-0010">Activator</keyword>
<keyword id="KW-0175">Coiled coil</keyword>
<keyword id="KW-0539">Nucleus</keyword>
<keyword id="KW-1185">Reference proteome</keyword>
<keyword id="KW-0804">Transcription</keyword>
<keyword id="KW-0805">Transcription regulation</keyword>